<accession>Q0W5H2</accession>
<reference key="1">
    <citation type="journal article" date="2006" name="Science">
        <title>Genome of rice cluster I archaea -- the key methane producers in the rice rhizosphere.</title>
        <authorList>
            <person name="Erkel C."/>
            <person name="Kube M."/>
            <person name="Reinhardt R."/>
            <person name="Liesack W."/>
        </authorList>
    </citation>
    <scope>NUCLEOTIDE SEQUENCE [LARGE SCALE GENOMIC DNA]</scope>
    <source>
        <strain>DSM 22066 / NBRC 105507 / MRE50</strain>
    </source>
</reference>
<proteinExistence type="inferred from homology"/>
<feature type="chain" id="PRO_1000002606" description="Translation initiation factor 6">
    <location>
        <begin position="1"/>
        <end position="221"/>
    </location>
</feature>
<evidence type="ECO:0000255" key="1">
    <source>
        <dbReference type="HAMAP-Rule" id="MF_00032"/>
    </source>
</evidence>
<comment type="function">
    <text evidence="1">Binds to the 50S ribosomal subunit and prevents its association with the 30S ribosomal subunit to form the 70S initiation complex.</text>
</comment>
<comment type="similarity">
    <text evidence="1">Belongs to the eIF-6 family.</text>
</comment>
<sequence length="221" mass="23430">MIRQIDFYGYPYVGIYAANTEQVVVLPPDLPQATVDLVAETLGTAVVRTLINESTLIGSMMTGNSNGFIVSDLTLDREANLLQEHGKVTRLKGKMTAAGNLILANDTAALVHPALTDKNIEAIEKTLKVEVRRGTIGGLKTVGMAGCATNKGILVHPRATEEELTVLEDLFKLPVDIGTVSFGSPLVGSAILATTKGLITGTRTSGPELGRIEDALGFIEE</sequence>
<keyword id="KW-0396">Initiation factor</keyword>
<keyword id="KW-0648">Protein biosynthesis</keyword>
<keyword id="KW-1185">Reference proteome</keyword>
<organism>
    <name type="scientific">Methanocella arvoryzae (strain DSM 22066 / NBRC 105507 / MRE50)</name>
    <dbReference type="NCBI Taxonomy" id="351160"/>
    <lineage>
        <taxon>Archaea</taxon>
        <taxon>Methanobacteriati</taxon>
        <taxon>Methanobacteriota</taxon>
        <taxon>Stenosarchaea group</taxon>
        <taxon>Methanomicrobia</taxon>
        <taxon>Methanocellales</taxon>
        <taxon>Methanocellaceae</taxon>
        <taxon>Methanocella</taxon>
    </lineage>
</organism>
<dbReference type="EMBL" id="AM114193">
    <property type="protein sequence ID" value="CAJ36371.1"/>
    <property type="molecule type" value="Genomic_DNA"/>
</dbReference>
<dbReference type="RefSeq" id="WP_012036152.1">
    <property type="nucleotide sequence ID" value="NC_009464.1"/>
</dbReference>
<dbReference type="SMR" id="Q0W5H2"/>
<dbReference type="STRING" id="351160.RCIX1042"/>
<dbReference type="GeneID" id="5144538"/>
<dbReference type="KEGG" id="rci:RCIX1042"/>
<dbReference type="PATRIC" id="fig|351160.9.peg.1870"/>
<dbReference type="eggNOG" id="arCOG04176">
    <property type="taxonomic scope" value="Archaea"/>
</dbReference>
<dbReference type="OrthoDB" id="33582at2157"/>
<dbReference type="Proteomes" id="UP000000663">
    <property type="component" value="Chromosome"/>
</dbReference>
<dbReference type="GO" id="GO:0043022">
    <property type="term" value="F:ribosome binding"/>
    <property type="evidence" value="ECO:0007669"/>
    <property type="project" value="InterPro"/>
</dbReference>
<dbReference type="GO" id="GO:0003743">
    <property type="term" value="F:translation initiation factor activity"/>
    <property type="evidence" value="ECO:0007669"/>
    <property type="project" value="UniProtKB-UniRule"/>
</dbReference>
<dbReference type="GO" id="GO:0042256">
    <property type="term" value="P:cytosolic ribosome assembly"/>
    <property type="evidence" value="ECO:0007669"/>
    <property type="project" value="InterPro"/>
</dbReference>
<dbReference type="Gene3D" id="3.75.10.10">
    <property type="entry name" value="L-arginine/glycine Amidinotransferase, Chain A"/>
    <property type="match status" value="1"/>
</dbReference>
<dbReference type="HAMAP" id="MF_00032">
    <property type="entry name" value="eIF_6"/>
    <property type="match status" value="1"/>
</dbReference>
<dbReference type="InterPro" id="IPR002769">
    <property type="entry name" value="eIF6"/>
</dbReference>
<dbReference type="NCBIfam" id="TIGR00323">
    <property type="entry name" value="eIF-6"/>
    <property type="match status" value="1"/>
</dbReference>
<dbReference type="NCBIfam" id="NF003130">
    <property type="entry name" value="PRK04046.2-1"/>
    <property type="match status" value="1"/>
</dbReference>
<dbReference type="PANTHER" id="PTHR10784">
    <property type="entry name" value="TRANSLATION INITIATION FACTOR 6"/>
    <property type="match status" value="1"/>
</dbReference>
<dbReference type="Pfam" id="PF01912">
    <property type="entry name" value="eIF-6"/>
    <property type="match status" value="1"/>
</dbReference>
<dbReference type="PIRSF" id="PIRSF006413">
    <property type="entry name" value="IF-6"/>
    <property type="match status" value="1"/>
</dbReference>
<dbReference type="SMART" id="SM00654">
    <property type="entry name" value="eIF6"/>
    <property type="match status" value="1"/>
</dbReference>
<dbReference type="SUPFAM" id="SSF55909">
    <property type="entry name" value="Pentein"/>
    <property type="match status" value="1"/>
</dbReference>
<name>IF6_METAR</name>
<protein>
    <recommendedName>
        <fullName evidence="1">Translation initiation factor 6</fullName>
        <shortName evidence="1">aIF-6</shortName>
    </recommendedName>
</protein>
<gene>
    <name evidence="1" type="primary">eif6</name>
    <name type="ordered locus">UNCMA_18270</name>
    <name type="ORF">RCIX1042</name>
</gene>